<name>ILI6_ORYSI</name>
<gene>
    <name type="primary">ILI6</name>
    <name type="ORF">OsI_10199</name>
</gene>
<comment type="function">
    <text evidence="1">Atypical and probable non DNA-binding bHLH transcription factor that acts as a positive regulator of grain size. Binds the transcription repressor APG and forms a heterodimer of antagonistic bHLH transcription factors that regulates grain length and weight by controlling cell elongation in lemma and palea. May be involved in the control of lamina inclination through brassinosteroid signaling pathway (By similarity).</text>
</comment>
<comment type="subunit">
    <text evidence="1">Interacts with APG.</text>
</comment>
<comment type="subcellular location">
    <subcellularLocation>
        <location evidence="2">Nucleus</location>
    </subcellularLocation>
</comment>
<comment type="similarity">
    <text>Belongs to the bHLH protein family.</text>
</comment>
<proteinExistence type="inferred from homology"/>
<keyword id="KW-1070">Brassinosteroid signaling pathway</keyword>
<keyword id="KW-0341">Growth regulation</keyword>
<keyword id="KW-0539">Nucleus</keyword>
<keyword id="KW-1185">Reference proteome</keyword>
<keyword id="KW-0804">Transcription</keyword>
<keyword id="KW-0805">Transcription regulation</keyword>
<feature type="chain" id="PRO_0000429099" description="Transcription factor ILI6">
    <location>
        <begin position="1"/>
        <end position="92"/>
    </location>
</feature>
<feature type="domain" description="bHLH" evidence="2">
    <location>
        <begin position="5"/>
        <end position="59"/>
    </location>
</feature>
<feature type="region of interest" description="Disordered" evidence="3">
    <location>
        <begin position="1"/>
        <end position="20"/>
    </location>
</feature>
<evidence type="ECO:0000250" key="1"/>
<evidence type="ECO:0000255" key="2">
    <source>
        <dbReference type="PROSITE-ProRule" id="PRU00981"/>
    </source>
</evidence>
<evidence type="ECO:0000256" key="3">
    <source>
        <dbReference type="SAM" id="MobiDB-lite"/>
    </source>
</evidence>
<organism>
    <name type="scientific">Oryza sativa subsp. indica</name>
    <name type="common">Rice</name>
    <dbReference type="NCBI Taxonomy" id="39946"/>
    <lineage>
        <taxon>Eukaryota</taxon>
        <taxon>Viridiplantae</taxon>
        <taxon>Streptophyta</taxon>
        <taxon>Embryophyta</taxon>
        <taxon>Tracheophyta</taxon>
        <taxon>Spermatophyta</taxon>
        <taxon>Magnoliopsida</taxon>
        <taxon>Liliopsida</taxon>
        <taxon>Poales</taxon>
        <taxon>Poaceae</taxon>
        <taxon>BOP clade</taxon>
        <taxon>Oryzoideae</taxon>
        <taxon>Oryzeae</taxon>
        <taxon>Oryzinae</taxon>
        <taxon>Oryza</taxon>
        <taxon>Oryza sativa</taxon>
    </lineage>
</organism>
<dbReference type="EMBL" id="CM000128">
    <property type="protein sequence ID" value="EEC74604.1"/>
    <property type="molecule type" value="Genomic_DNA"/>
</dbReference>
<dbReference type="SMR" id="B8APB5"/>
<dbReference type="STRING" id="39946.B8APB5"/>
<dbReference type="EnsemblPlants" id="BGIOSGA011363-TA">
    <property type="protein sequence ID" value="BGIOSGA011363-PA"/>
    <property type="gene ID" value="BGIOSGA011363"/>
</dbReference>
<dbReference type="EnsemblPlants" id="OsGoSa_03g0005310.01">
    <property type="protein sequence ID" value="OsGoSa_03g0005310.01"/>
    <property type="gene ID" value="OsGoSa_03g0005310"/>
</dbReference>
<dbReference type="EnsemblPlants" id="OsIR64_03g0005260.01">
    <property type="protein sequence ID" value="OsIR64_03g0005260.01"/>
    <property type="gene ID" value="OsIR64_03g0005260"/>
</dbReference>
<dbReference type="EnsemblPlants" id="OsKYG_03g0005350.01">
    <property type="protein sequence ID" value="OsKYG_03g0005350.01"/>
    <property type="gene ID" value="OsKYG_03g0005350"/>
</dbReference>
<dbReference type="EnsemblPlants" id="OsKYG_03g0005350.02">
    <property type="protein sequence ID" value="OsKYG_03g0005350.02"/>
    <property type="gene ID" value="OsKYG_03g0005350"/>
</dbReference>
<dbReference type="EnsemblPlants" id="OsLaMu_03g0005330.01">
    <property type="protein sequence ID" value="OsLaMu_03g0005330.01"/>
    <property type="gene ID" value="OsLaMu_03g0005330"/>
</dbReference>
<dbReference type="EnsemblPlants" id="OsLaMu_03g0005330.02">
    <property type="protein sequence ID" value="OsLaMu_03g0005330.02"/>
    <property type="gene ID" value="OsLaMu_03g0005330"/>
</dbReference>
<dbReference type="EnsemblPlants" id="OsLima_03g0005350.01">
    <property type="protein sequence ID" value="OsLima_03g0005350.01"/>
    <property type="gene ID" value="OsLima_03g0005350"/>
</dbReference>
<dbReference type="EnsemblPlants" id="OsLiXu_03g0005350.02">
    <property type="protein sequence ID" value="OsLiXu_03g0005350.02"/>
    <property type="gene ID" value="OsLiXu_03g0005350"/>
</dbReference>
<dbReference type="EnsemblPlants" id="OsMH63_03G005290_01">
    <property type="protein sequence ID" value="OsMH63_03G005290_01"/>
    <property type="gene ID" value="OsMH63_03G005290"/>
</dbReference>
<dbReference type="EnsemblPlants" id="OsPr106_03g0005370.04">
    <property type="protein sequence ID" value="OsPr106_03g0005370.04"/>
    <property type="gene ID" value="OsPr106_03g0005370"/>
</dbReference>
<dbReference type="EnsemblPlants" id="OsZS97_03G005180_03">
    <property type="protein sequence ID" value="OsZS97_03G005180_03"/>
    <property type="gene ID" value="OsZS97_03G005180"/>
</dbReference>
<dbReference type="Gramene" id="BGIOSGA011363-TA">
    <property type="protein sequence ID" value="BGIOSGA011363-PA"/>
    <property type="gene ID" value="BGIOSGA011363"/>
</dbReference>
<dbReference type="Gramene" id="OsGoSa_03g0005310.01">
    <property type="protein sequence ID" value="OsGoSa_03g0005310.01"/>
    <property type="gene ID" value="OsGoSa_03g0005310"/>
</dbReference>
<dbReference type="Gramene" id="OsIR64_03g0005260.01">
    <property type="protein sequence ID" value="OsIR64_03g0005260.01"/>
    <property type="gene ID" value="OsIR64_03g0005260"/>
</dbReference>
<dbReference type="Gramene" id="OsKYG_03g0005350.01">
    <property type="protein sequence ID" value="OsKYG_03g0005350.01"/>
    <property type="gene ID" value="OsKYG_03g0005350"/>
</dbReference>
<dbReference type="Gramene" id="OsKYG_03g0005350.02">
    <property type="protein sequence ID" value="OsKYG_03g0005350.02"/>
    <property type="gene ID" value="OsKYG_03g0005350"/>
</dbReference>
<dbReference type="Gramene" id="OsLaMu_03g0005330.01">
    <property type="protein sequence ID" value="OsLaMu_03g0005330.01"/>
    <property type="gene ID" value="OsLaMu_03g0005330"/>
</dbReference>
<dbReference type="Gramene" id="OsLaMu_03g0005330.02">
    <property type="protein sequence ID" value="OsLaMu_03g0005330.02"/>
    <property type="gene ID" value="OsLaMu_03g0005330"/>
</dbReference>
<dbReference type="Gramene" id="OsLima_03g0005350.01">
    <property type="protein sequence ID" value="OsLima_03g0005350.01"/>
    <property type="gene ID" value="OsLima_03g0005350"/>
</dbReference>
<dbReference type="Gramene" id="OsLiXu_03g0005350.02">
    <property type="protein sequence ID" value="OsLiXu_03g0005350.02"/>
    <property type="gene ID" value="OsLiXu_03g0005350"/>
</dbReference>
<dbReference type="Gramene" id="OsMH63_03G005290_01">
    <property type="protein sequence ID" value="OsMH63_03G005290_01"/>
    <property type="gene ID" value="OsMH63_03G005290"/>
</dbReference>
<dbReference type="Gramene" id="OsPr106_03g0005370.04">
    <property type="protein sequence ID" value="OsPr106_03g0005370.04"/>
    <property type="gene ID" value="OsPr106_03g0005370"/>
</dbReference>
<dbReference type="Gramene" id="OsZS97_03G005180_03">
    <property type="protein sequence ID" value="OsZS97_03G005180_03"/>
    <property type="gene ID" value="OsZS97_03G005180"/>
</dbReference>
<dbReference type="HOGENOM" id="CLU_183267_0_0_1"/>
<dbReference type="OMA" id="LPEIHNR"/>
<dbReference type="OrthoDB" id="10521633at2759"/>
<dbReference type="Proteomes" id="UP000007015">
    <property type="component" value="Chromosome 3"/>
</dbReference>
<dbReference type="GO" id="GO:0005634">
    <property type="term" value="C:nucleus"/>
    <property type="evidence" value="ECO:0007669"/>
    <property type="project" value="UniProtKB-SubCell"/>
</dbReference>
<dbReference type="GO" id="GO:0046983">
    <property type="term" value="F:protein dimerization activity"/>
    <property type="evidence" value="ECO:0007669"/>
    <property type="project" value="InterPro"/>
</dbReference>
<dbReference type="GO" id="GO:0009742">
    <property type="term" value="P:brassinosteroid mediated signaling pathway"/>
    <property type="evidence" value="ECO:0007669"/>
    <property type="project" value="UniProtKB-KW"/>
</dbReference>
<dbReference type="GO" id="GO:0006355">
    <property type="term" value="P:regulation of DNA-templated transcription"/>
    <property type="evidence" value="ECO:0007669"/>
    <property type="project" value="InterPro"/>
</dbReference>
<dbReference type="GO" id="GO:0080113">
    <property type="term" value="P:regulation of seed growth"/>
    <property type="evidence" value="ECO:0007669"/>
    <property type="project" value="EnsemblPlants"/>
</dbReference>
<dbReference type="FunFam" id="4.10.280.10:FF:000082">
    <property type="entry name" value="Transcription factor ILI6"/>
    <property type="match status" value="1"/>
</dbReference>
<dbReference type="Gene3D" id="4.10.280.10">
    <property type="entry name" value="Helix-loop-helix DNA-binding domain"/>
    <property type="match status" value="1"/>
</dbReference>
<dbReference type="InterPro" id="IPR011598">
    <property type="entry name" value="bHLH_dom"/>
</dbReference>
<dbReference type="InterPro" id="IPR036638">
    <property type="entry name" value="HLH_DNA-bd_sf"/>
</dbReference>
<dbReference type="InterPro" id="IPR044293">
    <property type="entry name" value="PRE"/>
</dbReference>
<dbReference type="PANTHER" id="PTHR46446:SF38">
    <property type="entry name" value="TRANSCRIPTION FACTOR ILI6"/>
    <property type="match status" value="1"/>
</dbReference>
<dbReference type="PANTHER" id="PTHR46446">
    <property type="entry name" value="TRANSCRIPTION FACTOR PRE"/>
    <property type="match status" value="1"/>
</dbReference>
<dbReference type="Pfam" id="PF23174">
    <property type="entry name" value="bHLH_ILI"/>
    <property type="match status" value="1"/>
</dbReference>
<dbReference type="SUPFAM" id="SSF47459">
    <property type="entry name" value="HLH, helix-loop-helix DNA-binding domain"/>
    <property type="match status" value="1"/>
</dbReference>
<dbReference type="PROSITE" id="PS50888">
    <property type="entry name" value="BHLH"/>
    <property type="match status" value="1"/>
</dbReference>
<accession>B8APB5</accession>
<sequence>MSSRRSRSRQSGSSRITDEQISDLVSKLQDLLPEARLRSNDRVPSSRVLQETCNYIRSLHQEVDDLSERLSELLATSDMSSAQAAIIRSLLM</sequence>
<reference key="1">
    <citation type="journal article" date="2005" name="PLoS Biol.">
        <title>The genomes of Oryza sativa: a history of duplications.</title>
        <authorList>
            <person name="Yu J."/>
            <person name="Wang J."/>
            <person name="Lin W."/>
            <person name="Li S."/>
            <person name="Li H."/>
            <person name="Zhou J."/>
            <person name="Ni P."/>
            <person name="Dong W."/>
            <person name="Hu S."/>
            <person name="Zeng C."/>
            <person name="Zhang J."/>
            <person name="Zhang Y."/>
            <person name="Li R."/>
            <person name="Xu Z."/>
            <person name="Li S."/>
            <person name="Li X."/>
            <person name="Zheng H."/>
            <person name="Cong L."/>
            <person name="Lin L."/>
            <person name="Yin J."/>
            <person name="Geng J."/>
            <person name="Li G."/>
            <person name="Shi J."/>
            <person name="Liu J."/>
            <person name="Lv H."/>
            <person name="Li J."/>
            <person name="Wang J."/>
            <person name="Deng Y."/>
            <person name="Ran L."/>
            <person name="Shi X."/>
            <person name="Wang X."/>
            <person name="Wu Q."/>
            <person name="Li C."/>
            <person name="Ren X."/>
            <person name="Wang J."/>
            <person name="Wang X."/>
            <person name="Li D."/>
            <person name="Liu D."/>
            <person name="Zhang X."/>
            <person name="Ji Z."/>
            <person name="Zhao W."/>
            <person name="Sun Y."/>
            <person name="Zhang Z."/>
            <person name="Bao J."/>
            <person name="Han Y."/>
            <person name="Dong L."/>
            <person name="Ji J."/>
            <person name="Chen P."/>
            <person name="Wu S."/>
            <person name="Liu J."/>
            <person name="Xiao Y."/>
            <person name="Bu D."/>
            <person name="Tan J."/>
            <person name="Yang L."/>
            <person name="Ye C."/>
            <person name="Zhang J."/>
            <person name="Xu J."/>
            <person name="Zhou Y."/>
            <person name="Yu Y."/>
            <person name="Zhang B."/>
            <person name="Zhuang S."/>
            <person name="Wei H."/>
            <person name="Liu B."/>
            <person name="Lei M."/>
            <person name="Yu H."/>
            <person name="Li Y."/>
            <person name="Xu H."/>
            <person name="Wei S."/>
            <person name="He X."/>
            <person name="Fang L."/>
            <person name="Zhang Z."/>
            <person name="Zhang Y."/>
            <person name="Huang X."/>
            <person name="Su Z."/>
            <person name="Tong W."/>
            <person name="Li J."/>
            <person name="Tong Z."/>
            <person name="Li S."/>
            <person name="Ye J."/>
            <person name="Wang L."/>
            <person name="Fang L."/>
            <person name="Lei T."/>
            <person name="Chen C.-S."/>
            <person name="Chen H.-C."/>
            <person name="Xu Z."/>
            <person name="Li H."/>
            <person name="Huang H."/>
            <person name="Zhang F."/>
            <person name="Xu H."/>
            <person name="Li N."/>
            <person name="Zhao C."/>
            <person name="Li S."/>
            <person name="Dong L."/>
            <person name="Huang Y."/>
            <person name="Li L."/>
            <person name="Xi Y."/>
            <person name="Qi Q."/>
            <person name="Li W."/>
            <person name="Zhang B."/>
            <person name="Hu W."/>
            <person name="Zhang Y."/>
            <person name="Tian X."/>
            <person name="Jiao Y."/>
            <person name="Liang X."/>
            <person name="Jin J."/>
            <person name="Gao L."/>
            <person name="Zheng W."/>
            <person name="Hao B."/>
            <person name="Liu S.-M."/>
            <person name="Wang W."/>
            <person name="Yuan L."/>
            <person name="Cao M."/>
            <person name="McDermott J."/>
            <person name="Samudrala R."/>
            <person name="Wang J."/>
            <person name="Wong G.K.-S."/>
            <person name="Yang H."/>
        </authorList>
    </citation>
    <scope>NUCLEOTIDE SEQUENCE [LARGE SCALE GENOMIC DNA]</scope>
    <source>
        <strain>cv. 93-11</strain>
    </source>
</reference>
<protein>
    <recommendedName>
        <fullName>Transcription factor ILI6</fullName>
        <shortName>OsILI6</shortName>
    </recommendedName>
    <alternativeName>
        <fullName>Protein INCREASED LEAF INCLINATION 6</fullName>
    </alternativeName>
</protein>